<reference key="1">
    <citation type="submission" date="2006-06" db="EMBL/GenBank/DDBJ databases">
        <title>Complete sequence of Pseudoalteromonas atlantica T6c.</title>
        <authorList>
            <consortium name="US DOE Joint Genome Institute"/>
            <person name="Copeland A."/>
            <person name="Lucas S."/>
            <person name="Lapidus A."/>
            <person name="Barry K."/>
            <person name="Detter J.C."/>
            <person name="Glavina del Rio T."/>
            <person name="Hammon N."/>
            <person name="Israni S."/>
            <person name="Dalin E."/>
            <person name="Tice H."/>
            <person name="Pitluck S."/>
            <person name="Saunders E."/>
            <person name="Brettin T."/>
            <person name="Bruce D."/>
            <person name="Han C."/>
            <person name="Tapia R."/>
            <person name="Gilna P."/>
            <person name="Schmutz J."/>
            <person name="Larimer F."/>
            <person name="Land M."/>
            <person name="Hauser L."/>
            <person name="Kyrpides N."/>
            <person name="Kim E."/>
            <person name="Karls A.C."/>
            <person name="Bartlett D."/>
            <person name="Higgins B.P."/>
            <person name="Richardson P."/>
        </authorList>
    </citation>
    <scope>NUCLEOTIDE SEQUENCE [LARGE SCALE GENOMIC DNA]</scope>
    <source>
        <strain>T6c / ATCC BAA-1087</strain>
    </source>
</reference>
<sequence>MSEMTPREIVHELDRHIIGQKNAKRAVSVALRNRWRRMQLSGDLRQEVTPKNILMIGPTGVGKTEIARRLAKLANAPFIKVEATKFTEVGYVGKEVETIIRDLADIAVKMAKEQETKKVKYRAEEAAEERILDVLLPPAENQWGEKEQNEDKGTRQTFRKKLREGQLDDKEIEIDVALPQVGVEIMAPPGMEEMTNQLQGMFQNLSGSQKKKKKLKIKEAFKLLIEEEAARLVNQEDLKANAIESLEQNGIVFIDEIDKICKREGSNSGGDVSREGVQRDLLPLVEGSTVSTKHGMVKTDHILFIASGAFQMAKPSDLIPELQGRLPIRVELEALTAGDFIRILTEPNASLTEQYIALLKTEGVDVDFTQDGIERIAQAAWQVNERTENIGARRLHTVMERLMEEISFDASEKSGEQLTVDAKYVNDHLEMLVENEDLSRFIL</sequence>
<evidence type="ECO:0000255" key="1">
    <source>
        <dbReference type="HAMAP-Rule" id="MF_00249"/>
    </source>
</evidence>
<evidence type="ECO:0000256" key="2">
    <source>
        <dbReference type="SAM" id="MobiDB-lite"/>
    </source>
</evidence>
<proteinExistence type="inferred from homology"/>
<comment type="function">
    <text evidence="1">ATPase subunit of a proteasome-like degradation complex; this subunit has chaperone activity. The binding of ATP and its subsequent hydrolysis by HslU are essential for unfolding of protein substrates subsequently hydrolyzed by HslV. HslU recognizes the N-terminal part of its protein substrates and unfolds these before they are guided to HslV for hydrolysis.</text>
</comment>
<comment type="subunit">
    <text evidence="1">A double ring-shaped homohexamer of HslV is capped on each side by a ring-shaped HslU homohexamer. The assembly of the HslU/HslV complex is dependent on binding of ATP.</text>
</comment>
<comment type="subcellular location">
    <subcellularLocation>
        <location evidence="1">Cytoplasm</location>
    </subcellularLocation>
</comment>
<comment type="similarity">
    <text evidence="1">Belongs to the ClpX chaperone family. HslU subfamily.</text>
</comment>
<organism>
    <name type="scientific">Pseudoalteromonas atlantica (strain T6c / ATCC BAA-1087)</name>
    <dbReference type="NCBI Taxonomy" id="3042615"/>
    <lineage>
        <taxon>Bacteria</taxon>
        <taxon>Pseudomonadati</taxon>
        <taxon>Pseudomonadota</taxon>
        <taxon>Gammaproteobacteria</taxon>
        <taxon>Alteromonadales</taxon>
        <taxon>Alteromonadaceae</taxon>
        <taxon>Paraglaciecola</taxon>
    </lineage>
</organism>
<protein>
    <recommendedName>
        <fullName evidence="1">ATP-dependent protease ATPase subunit HslU</fullName>
    </recommendedName>
    <alternativeName>
        <fullName evidence="1">Unfoldase HslU</fullName>
    </alternativeName>
</protein>
<accession>Q15N47</accession>
<keyword id="KW-0067">ATP-binding</keyword>
<keyword id="KW-0143">Chaperone</keyword>
<keyword id="KW-0963">Cytoplasm</keyword>
<keyword id="KW-0547">Nucleotide-binding</keyword>
<keyword id="KW-0346">Stress response</keyword>
<feature type="chain" id="PRO_1000012770" description="ATP-dependent protease ATPase subunit HslU">
    <location>
        <begin position="1"/>
        <end position="443"/>
    </location>
</feature>
<feature type="region of interest" description="Disordered" evidence="2">
    <location>
        <begin position="138"/>
        <end position="158"/>
    </location>
</feature>
<feature type="compositionally biased region" description="Basic and acidic residues" evidence="2">
    <location>
        <begin position="143"/>
        <end position="154"/>
    </location>
</feature>
<feature type="binding site" evidence="1">
    <location>
        <position position="18"/>
    </location>
    <ligand>
        <name>ATP</name>
        <dbReference type="ChEBI" id="CHEBI:30616"/>
    </ligand>
</feature>
<feature type="binding site" evidence="1">
    <location>
        <begin position="60"/>
        <end position="65"/>
    </location>
    <ligand>
        <name>ATP</name>
        <dbReference type="ChEBI" id="CHEBI:30616"/>
    </ligand>
</feature>
<feature type="binding site" evidence="1">
    <location>
        <position position="255"/>
    </location>
    <ligand>
        <name>ATP</name>
        <dbReference type="ChEBI" id="CHEBI:30616"/>
    </ligand>
</feature>
<feature type="binding site" evidence="1">
    <location>
        <position position="321"/>
    </location>
    <ligand>
        <name>ATP</name>
        <dbReference type="ChEBI" id="CHEBI:30616"/>
    </ligand>
</feature>
<feature type="binding site" evidence="1">
    <location>
        <position position="393"/>
    </location>
    <ligand>
        <name>ATP</name>
        <dbReference type="ChEBI" id="CHEBI:30616"/>
    </ligand>
</feature>
<dbReference type="EMBL" id="CP000388">
    <property type="protein sequence ID" value="ABG42691.1"/>
    <property type="molecule type" value="Genomic_DNA"/>
</dbReference>
<dbReference type="RefSeq" id="WP_011576881.1">
    <property type="nucleotide sequence ID" value="NC_008228.1"/>
</dbReference>
<dbReference type="SMR" id="Q15N47"/>
<dbReference type="STRING" id="342610.Patl_4192"/>
<dbReference type="KEGG" id="pat:Patl_4192"/>
<dbReference type="eggNOG" id="COG1220">
    <property type="taxonomic scope" value="Bacteria"/>
</dbReference>
<dbReference type="HOGENOM" id="CLU_033123_0_0_6"/>
<dbReference type="OrthoDB" id="9804062at2"/>
<dbReference type="Proteomes" id="UP000001981">
    <property type="component" value="Chromosome"/>
</dbReference>
<dbReference type="GO" id="GO:0009376">
    <property type="term" value="C:HslUV protease complex"/>
    <property type="evidence" value="ECO:0007669"/>
    <property type="project" value="UniProtKB-UniRule"/>
</dbReference>
<dbReference type="GO" id="GO:0005524">
    <property type="term" value="F:ATP binding"/>
    <property type="evidence" value="ECO:0007669"/>
    <property type="project" value="UniProtKB-UniRule"/>
</dbReference>
<dbReference type="GO" id="GO:0016887">
    <property type="term" value="F:ATP hydrolysis activity"/>
    <property type="evidence" value="ECO:0007669"/>
    <property type="project" value="InterPro"/>
</dbReference>
<dbReference type="GO" id="GO:0008233">
    <property type="term" value="F:peptidase activity"/>
    <property type="evidence" value="ECO:0007669"/>
    <property type="project" value="InterPro"/>
</dbReference>
<dbReference type="GO" id="GO:0036402">
    <property type="term" value="F:proteasome-activating activity"/>
    <property type="evidence" value="ECO:0007669"/>
    <property type="project" value="UniProtKB-UniRule"/>
</dbReference>
<dbReference type="GO" id="GO:0043335">
    <property type="term" value="P:protein unfolding"/>
    <property type="evidence" value="ECO:0007669"/>
    <property type="project" value="UniProtKB-UniRule"/>
</dbReference>
<dbReference type="GO" id="GO:0051603">
    <property type="term" value="P:proteolysis involved in protein catabolic process"/>
    <property type="evidence" value="ECO:0007669"/>
    <property type="project" value="TreeGrafter"/>
</dbReference>
<dbReference type="CDD" id="cd19498">
    <property type="entry name" value="RecA-like_HslU"/>
    <property type="match status" value="1"/>
</dbReference>
<dbReference type="FunFam" id="1.10.8.10:FF:000028">
    <property type="entry name" value="ATP-dependent protease ATPase subunit HslU"/>
    <property type="match status" value="1"/>
</dbReference>
<dbReference type="FunFam" id="1.10.8.60:FF:000027">
    <property type="entry name" value="ATP-dependent protease ATPase subunit HslU"/>
    <property type="match status" value="1"/>
</dbReference>
<dbReference type="FunFam" id="3.40.50.300:FF:000213">
    <property type="entry name" value="ATP-dependent protease ATPase subunit HslU"/>
    <property type="match status" value="1"/>
</dbReference>
<dbReference type="FunFam" id="3.40.50.300:FF:000220">
    <property type="entry name" value="ATP-dependent protease ATPase subunit HslU"/>
    <property type="match status" value="1"/>
</dbReference>
<dbReference type="Gene3D" id="1.10.8.60">
    <property type="match status" value="1"/>
</dbReference>
<dbReference type="Gene3D" id="3.40.50.300">
    <property type="entry name" value="P-loop containing nucleotide triphosphate hydrolases"/>
    <property type="match status" value="2"/>
</dbReference>
<dbReference type="HAMAP" id="MF_00249">
    <property type="entry name" value="HslU"/>
    <property type="match status" value="1"/>
</dbReference>
<dbReference type="InterPro" id="IPR003593">
    <property type="entry name" value="AAA+_ATPase"/>
</dbReference>
<dbReference type="InterPro" id="IPR050052">
    <property type="entry name" value="ATP-dep_Clp_protease_ClpX"/>
</dbReference>
<dbReference type="InterPro" id="IPR003959">
    <property type="entry name" value="ATPase_AAA_core"/>
</dbReference>
<dbReference type="InterPro" id="IPR019489">
    <property type="entry name" value="Clp_ATPase_C"/>
</dbReference>
<dbReference type="InterPro" id="IPR004491">
    <property type="entry name" value="HslU"/>
</dbReference>
<dbReference type="InterPro" id="IPR027417">
    <property type="entry name" value="P-loop_NTPase"/>
</dbReference>
<dbReference type="NCBIfam" id="TIGR00390">
    <property type="entry name" value="hslU"/>
    <property type="match status" value="1"/>
</dbReference>
<dbReference type="NCBIfam" id="NF003544">
    <property type="entry name" value="PRK05201.1"/>
    <property type="match status" value="1"/>
</dbReference>
<dbReference type="PANTHER" id="PTHR48102">
    <property type="entry name" value="ATP-DEPENDENT CLP PROTEASE ATP-BINDING SUBUNIT CLPX-LIKE, MITOCHONDRIAL-RELATED"/>
    <property type="match status" value="1"/>
</dbReference>
<dbReference type="PANTHER" id="PTHR48102:SF3">
    <property type="entry name" value="ATP-DEPENDENT PROTEASE ATPASE SUBUNIT HSLU"/>
    <property type="match status" value="1"/>
</dbReference>
<dbReference type="Pfam" id="PF00004">
    <property type="entry name" value="AAA"/>
    <property type="match status" value="1"/>
</dbReference>
<dbReference type="Pfam" id="PF07724">
    <property type="entry name" value="AAA_2"/>
    <property type="match status" value="1"/>
</dbReference>
<dbReference type="SMART" id="SM00382">
    <property type="entry name" value="AAA"/>
    <property type="match status" value="1"/>
</dbReference>
<dbReference type="SMART" id="SM01086">
    <property type="entry name" value="ClpB_D2-small"/>
    <property type="match status" value="1"/>
</dbReference>
<dbReference type="SUPFAM" id="SSF52540">
    <property type="entry name" value="P-loop containing nucleoside triphosphate hydrolases"/>
    <property type="match status" value="1"/>
</dbReference>
<name>HSLU_PSEA6</name>
<gene>
    <name evidence="1" type="primary">hslU</name>
    <name type="ordered locus">Patl_4192</name>
</gene>